<accession>O22833</accession>
<organism>
    <name type="scientific">Arabidopsis thaliana</name>
    <name type="common">Mouse-ear cress</name>
    <dbReference type="NCBI Taxonomy" id="3702"/>
    <lineage>
        <taxon>Eukaryota</taxon>
        <taxon>Viridiplantae</taxon>
        <taxon>Streptophyta</taxon>
        <taxon>Embryophyta</taxon>
        <taxon>Tracheophyta</taxon>
        <taxon>Spermatophyta</taxon>
        <taxon>Magnoliopsida</taxon>
        <taxon>eudicotyledons</taxon>
        <taxon>Gunneridae</taxon>
        <taxon>Pentapetalae</taxon>
        <taxon>rosids</taxon>
        <taxon>malvids</taxon>
        <taxon>Brassicales</taxon>
        <taxon>Brassicaceae</taxon>
        <taxon>Camelineae</taxon>
        <taxon>Arabidopsis</taxon>
    </lineage>
</organism>
<keyword id="KW-0067">ATP-binding</keyword>
<keyword id="KW-1003">Cell membrane</keyword>
<keyword id="KW-0325">Glycoprotein</keyword>
<keyword id="KW-0418">Kinase</keyword>
<keyword id="KW-0430">Lectin</keyword>
<keyword id="KW-0472">Membrane</keyword>
<keyword id="KW-0547">Nucleotide-binding</keyword>
<keyword id="KW-0611">Plant defense</keyword>
<keyword id="KW-0675">Receptor</keyword>
<keyword id="KW-1185">Reference proteome</keyword>
<keyword id="KW-0723">Serine/threonine-protein kinase</keyword>
<keyword id="KW-0732">Signal</keyword>
<keyword id="KW-0808">Transferase</keyword>
<keyword id="KW-0812">Transmembrane</keyword>
<keyword id="KW-1133">Transmembrane helix</keyword>
<gene>
    <name evidence="5" type="primary">LECRK54</name>
    <name evidence="6" type="synonym">LECRKC1</name>
    <name evidence="8" type="ordered locus">At2g43700</name>
    <name evidence="9" type="ORF">F18O19.19</name>
</gene>
<comment type="function">
    <text evidence="4">Involved in resistance response to the pathogenic oomycetes Phytophthora infestans and Phytophthora capsici and to the pathogenic bacteria Pseudomonas syringae.</text>
</comment>
<comment type="catalytic activity">
    <reaction evidence="3">
        <text>L-seryl-[protein] + ATP = O-phospho-L-seryl-[protein] + ADP + H(+)</text>
        <dbReference type="Rhea" id="RHEA:17989"/>
        <dbReference type="Rhea" id="RHEA-COMP:9863"/>
        <dbReference type="Rhea" id="RHEA-COMP:11604"/>
        <dbReference type="ChEBI" id="CHEBI:15378"/>
        <dbReference type="ChEBI" id="CHEBI:29999"/>
        <dbReference type="ChEBI" id="CHEBI:30616"/>
        <dbReference type="ChEBI" id="CHEBI:83421"/>
        <dbReference type="ChEBI" id="CHEBI:456216"/>
        <dbReference type="EC" id="2.7.11.1"/>
    </reaction>
</comment>
<comment type="catalytic activity">
    <reaction evidence="3">
        <text>L-threonyl-[protein] + ATP = O-phospho-L-threonyl-[protein] + ADP + H(+)</text>
        <dbReference type="Rhea" id="RHEA:46608"/>
        <dbReference type="Rhea" id="RHEA-COMP:11060"/>
        <dbReference type="Rhea" id="RHEA-COMP:11605"/>
        <dbReference type="ChEBI" id="CHEBI:15378"/>
        <dbReference type="ChEBI" id="CHEBI:30013"/>
        <dbReference type="ChEBI" id="CHEBI:30616"/>
        <dbReference type="ChEBI" id="CHEBI:61977"/>
        <dbReference type="ChEBI" id="CHEBI:456216"/>
        <dbReference type="EC" id="2.7.11.1"/>
    </reaction>
</comment>
<comment type="subcellular location">
    <subcellularLocation>
        <location evidence="1">Cell membrane</location>
        <topology evidence="2">Single-pass type I membrane protein</topology>
    </subcellularLocation>
</comment>
<comment type="disruption phenotype">
    <text evidence="4">Increased susceptibility to the oomycetes Phytophthora brassicae and Phytophthora capsici and to the bacteria Pseudomonas syringae, characterized by stronger necrotic symptoms.</text>
</comment>
<comment type="similarity">
    <text evidence="7">In the C-terminal section; belongs to the protein kinase superfamily. Ser/Thr protein kinase family.</text>
</comment>
<comment type="similarity">
    <text evidence="7">In the N-terminal section; belongs to the leguminous lectin family.</text>
</comment>
<protein>
    <recommendedName>
        <fullName evidence="5">L-type lectin-domain containing receptor kinase V.4</fullName>
        <shortName evidence="5">Arabidopsis thaliana lectin-receptor kinase c1</shortName>
        <shortName evidence="6">AthlecRK-c1</shortName>
        <shortName evidence="5">LecRK-V.4</shortName>
        <ecNumber evidence="3">2.7.11.1</ecNumber>
    </recommendedName>
</protein>
<sequence length="658" mass="73906">MSRTIGSRVIFLILALFCCTENSRGKLVMQGSAGFFKGYRTLTSTKKHAYGQAFEDEIVPFKNSANDTVTSFSVTFFFAIAPEDKHKGAHGMAFVISPTRGITGASADQYLGIFNKANNGDSSNHVIAVELDINKDEEFGDINDNHVGININGMRSIKFAPAGYYDQEGQFKDLSLISGSLLRVTILYSQMEKQLNVTLSSPEEAYYPNKPLLSLNQDLSPYILENMYVGFSASTGSVRAMHYMLSWFVHGGVDVPNLDLGIPTFPPYPKEKSLVYRIVLVTSLALVLFVALVASALSIFFYRRHKKVKEVLEEWEIQCGPHRFAYKELFKATKGFKQLLGKGGFGQVFKGTLPGSDAEIAVKRISHDSKQGMQEFLAEISTIGRLRHQNLVRLQGYCRYKEELYLVYDFMPNGSLDKYLYHRANQEQLTWNQRFKIIKDIASALCYLHHEWVQVVIHRDIKPANVLIDHQMNARLGDFGLAKLYDQGYDPQTSRVAGTFWYIAPELIRSGRATTGTDVYAFGLFMLEVSCGRRLIERRTASDEVVLAEWTLKCWENGDILEAVNDGIRHEDNREQLELVLKLGVLCSHQAVAIRPDMSKVVQILGGDLQLPDNLLDIVKAEKVRMWSETSESVLGVLTSQGSIGTLTLTEPFTSRGR</sequence>
<feature type="signal peptide" evidence="2">
    <location>
        <begin position="1"/>
        <end position="25"/>
    </location>
</feature>
<feature type="chain" id="PRO_0000403092" description="L-type lectin-domain containing receptor kinase V.4">
    <location>
        <begin position="26"/>
        <end position="658"/>
    </location>
</feature>
<feature type="topological domain" description="Extracellular" evidence="2">
    <location>
        <begin position="26"/>
        <end position="280"/>
    </location>
</feature>
<feature type="transmembrane region" description="Helical" evidence="2">
    <location>
        <begin position="281"/>
        <end position="301"/>
    </location>
</feature>
<feature type="topological domain" description="Cytoplasmic" evidence="2">
    <location>
        <begin position="302"/>
        <end position="658"/>
    </location>
</feature>
<feature type="domain" description="Protein kinase" evidence="3">
    <location>
        <begin position="334"/>
        <end position="592"/>
    </location>
</feature>
<feature type="region of interest" description="Legume-lectin like" evidence="2">
    <location>
        <begin position="26"/>
        <end position="248"/>
    </location>
</feature>
<feature type="active site" description="Proton acceptor" evidence="3">
    <location>
        <position position="460"/>
    </location>
</feature>
<feature type="binding site" evidence="3">
    <location>
        <begin position="340"/>
        <end position="348"/>
    </location>
    <ligand>
        <name>ATP</name>
        <dbReference type="ChEBI" id="CHEBI:30616"/>
    </ligand>
</feature>
<feature type="binding site" evidence="3">
    <location>
        <position position="363"/>
    </location>
    <ligand>
        <name>ATP</name>
        <dbReference type="ChEBI" id="CHEBI:30616"/>
    </ligand>
</feature>
<feature type="glycosylation site" description="N-linked (GlcNAc...) asparagine" evidence="2">
    <location>
        <position position="66"/>
    </location>
</feature>
<feature type="glycosylation site" description="N-linked (GlcNAc...) asparagine" evidence="2">
    <location>
        <position position="196"/>
    </location>
</feature>
<proteinExistence type="evidence at transcript level"/>
<name>LRK54_ARATH</name>
<evidence type="ECO:0000250" key="1">
    <source>
        <dbReference type="UniProtKB" id="Q9LSR8"/>
    </source>
</evidence>
<evidence type="ECO:0000255" key="2"/>
<evidence type="ECO:0000255" key="3">
    <source>
        <dbReference type="PROSITE-ProRule" id="PRU00159"/>
    </source>
</evidence>
<evidence type="ECO:0000269" key="4">
    <source>
    </source>
</evidence>
<evidence type="ECO:0000303" key="5">
    <source>
    </source>
</evidence>
<evidence type="ECO:0000303" key="6">
    <source ref="5"/>
</evidence>
<evidence type="ECO:0000305" key="7"/>
<evidence type="ECO:0000312" key="8">
    <source>
        <dbReference type="Araport" id="AT2G43700"/>
    </source>
</evidence>
<evidence type="ECO:0000312" key="9">
    <source>
        <dbReference type="EMBL" id="AAB64036.1"/>
    </source>
</evidence>
<dbReference type="EC" id="2.7.11.1" evidence="3"/>
<dbReference type="EMBL" id="AC002333">
    <property type="protein sequence ID" value="AAB64036.1"/>
    <property type="molecule type" value="Genomic_DNA"/>
</dbReference>
<dbReference type="EMBL" id="CP002685">
    <property type="protein sequence ID" value="AEC10309.1"/>
    <property type="molecule type" value="Genomic_DNA"/>
</dbReference>
<dbReference type="EMBL" id="AY074631">
    <property type="protein sequence ID" value="AAL69447.1"/>
    <property type="molecule type" value="mRNA"/>
</dbReference>
<dbReference type="PIR" id="D84869">
    <property type="entry name" value="D84869"/>
</dbReference>
<dbReference type="RefSeq" id="NP_181898.1">
    <property type="nucleotide sequence ID" value="NM_129932.6"/>
</dbReference>
<dbReference type="SMR" id="O22833"/>
<dbReference type="BioGRID" id="4308">
    <property type="interactions" value="18"/>
</dbReference>
<dbReference type="FunCoup" id="O22833">
    <property type="interactions" value="15"/>
</dbReference>
<dbReference type="IntAct" id="O22833">
    <property type="interactions" value="18"/>
</dbReference>
<dbReference type="STRING" id="3702.O22833"/>
<dbReference type="GlyCosmos" id="O22833">
    <property type="glycosylation" value="2 sites, No reported glycans"/>
</dbReference>
<dbReference type="GlyGen" id="O22833">
    <property type="glycosylation" value="2 sites"/>
</dbReference>
<dbReference type="PaxDb" id="3702-AT2G43700.1"/>
<dbReference type="ProteomicsDB" id="238778"/>
<dbReference type="EnsemblPlants" id="AT2G43700.1">
    <property type="protein sequence ID" value="AT2G43700.1"/>
    <property type="gene ID" value="AT2G43700"/>
</dbReference>
<dbReference type="GeneID" id="818972"/>
<dbReference type="Gramene" id="AT2G43700.1">
    <property type="protein sequence ID" value="AT2G43700.1"/>
    <property type="gene ID" value="AT2G43700"/>
</dbReference>
<dbReference type="KEGG" id="ath:AT2G43700"/>
<dbReference type="Araport" id="AT2G43700"/>
<dbReference type="TAIR" id="AT2G43700">
    <property type="gene designation" value="LECRK-V.4"/>
</dbReference>
<dbReference type="eggNOG" id="ENOG502QR0Z">
    <property type="taxonomic scope" value="Eukaryota"/>
</dbReference>
<dbReference type="HOGENOM" id="CLU_000288_62_3_1"/>
<dbReference type="InParanoid" id="O22833"/>
<dbReference type="PhylomeDB" id="O22833"/>
<dbReference type="PRO" id="PR:O22833"/>
<dbReference type="Proteomes" id="UP000006548">
    <property type="component" value="Chromosome 2"/>
</dbReference>
<dbReference type="ExpressionAtlas" id="O22833">
    <property type="expression patterns" value="baseline and differential"/>
</dbReference>
<dbReference type="GO" id="GO:0005886">
    <property type="term" value="C:plasma membrane"/>
    <property type="evidence" value="ECO:0000250"/>
    <property type="project" value="UniProtKB"/>
</dbReference>
<dbReference type="GO" id="GO:0005524">
    <property type="term" value="F:ATP binding"/>
    <property type="evidence" value="ECO:0007669"/>
    <property type="project" value="UniProtKB-KW"/>
</dbReference>
<dbReference type="GO" id="GO:0030246">
    <property type="term" value="F:carbohydrate binding"/>
    <property type="evidence" value="ECO:0007669"/>
    <property type="project" value="UniProtKB-KW"/>
</dbReference>
<dbReference type="GO" id="GO:0106310">
    <property type="term" value="F:protein serine kinase activity"/>
    <property type="evidence" value="ECO:0007669"/>
    <property type="project" value="RHEA"/>
</dbReference>
<dbReference type="GO" id="GO:0004674">
    <property type="term" value="F:protein serine/threonine kinase activity"/>
    <property type="evidence" value="ECO:0007669"/>
    <property type="project" value="UniProtKB-KW"/>
</dbReference>
<dbReference type="GO" id="GO:0042742">
    <property type="term" value="P:defense response to bacterium"/>
    <property type="evidence" value="ECO:0000315"/>
    <property type="project" value="UniProtKB"/>
</dbReference>
<dbReference type="GO" id="GO:0002229">
    <property type="term" value="P:defense response to oomycetes"/>
    <property type="evidence" value="ECO:0000315"/>
    <property type="project" value="UniProtKB"/>
</dbReference>
<dbReference type="CDD" id="cd06899">
    <property type="entry name" value="lectin_legume_LecRK_Arcelin_ConA"/>
    <property type="match status" value="1"/>
</dbReference>
<dbReference type="FunFam" id="1.10.510.10:FF:000108">
    <property type="entry name" value="L-type lectin-domain containing receptor kinase S.4"/>
    <property type="match status" value="1"/>
</dbReference>
<dbReference type="FunFam" id="2.60.120.200:FF:000086">
    <property type="entry name" value="L-type lectin-domain containing receptor kinase S.4"/>
    <property type="match status" value="1"/>
</dbReference>
<dbReference type="FunFam" id="3.30.200.20:FF:000112">
    <property type="entry name" value="Lectin-domain containing receptor kinase A4.3"/>
    <property type="match status" value="1"/>
</dbReference>
<dbReference type="Gene3D" id="2.60.120.200">
    <property type="match status" value="1"/>
</dbReference>
<dbReference type="Gene3D" id="3.30.200.20">
    <property type="entry name" value="Phosphorylase Kinase, domain 1"/>
    <property type="match status" value="1"/>
</dbReference>
<dbReference type="Gene3D" id="1.10.510.10">
    <property type="entry name" value="Transferase(Phosphotransferase) domain 1"/>
    <property type="match status" value="1"/>
</dbReference>
<dbReference type="InterPro" id="IPR013320">
    <property type="entry name" value="ConA-like_dom_sf"/>
</dbReference>
<dbReference type="InterPro" id="IPR011009">
    <property type="entry name" value="Kinase-like_dom_sf"/>
</dbReference>
<dbReference type="InterPro" id="IPR050528">
    <property type="entry name" value="L-type_Lectin-RKs"/>
</dbReference>
<dbReference type="InterPro" id="IPR001220">
    <property type="entry name" value="Legume_lectin_dom"/>
</dbReference>
<dbReference type="InterPro" id="IPR000719">
    <property type="entry name" value="Prot_kinase_dom"/>
</dbReference>
<dbReference type="InterPro" id="IPR017441">
    <property type="entry name" value="Protein_kinase_ATP_BS"/>
</dbReference>
<dbReference type="InterPro" id="IPR008271">
    <property type="entry name" value="Ser/Thr_kinase_AS"/>
</dbReference>
<dbReference type="PANTHER" id="PTHR27007">
    <property type="match status" value="1"/>
</dbReference>
<dbReference type="Pfam" id="PF00139">
    <property type="entry name" value="Lectin_legB"/>
    <property type="match status" value="1"/>
</dbReference>
<dbReference type="Pfam" id="PF00069">
    <property type="entry name" value="Pkinase"/>
    <property type="match status" value="1"/>
</dbReference>
<dbReference type="SMART" id="SM00220">
    <property type="entry name" value="S_TKc"/>
    <property type="match status" value="1"/>
</dbReference>
<dbReference type="SUPFAM" id="SSF49899">
    <property type="entry name" value="Concanavalin A-like lectins/glucanases"/>
    <property type="match status" value="1"/>
</dbReference>
<dbReference type="SUPFAM" id="SSF56112">
    <property type="entry name" value="Protein kinase-like (PK-like)"/>
    <property type="match status" value="1"/>
</dbReference>
<dbReference type="PROSITE" id="PS00107">
    <property type="entry name" value="PROTEIN_KINASE_ATP"/>
    <property type="match status" value="1"/>
</dbReference>
<dbReference type="PROSITE" id="PS50011">
    <property type="entry name" value="PROTEIN_KINASE_DOM"/>
    <property type="match status" value="1"/>
</dbReference>
<dbReference type="PROSITE" id="PS00108">
    <property type="entry name" value="PROTEIN_KINASE_ST"/>
    <property type="match status" value="1"/>
</dbReference>
<reference key="1">
    <citation type="journal article" date="1999" name="Nature">
        <title>Sequence and analysis of chromosome 2 of the plant Arabidopsis thaliana.</title>
        <authorList>
            <person name="Lin X."/>
            <person name="Kaul S."/>
            <person name="Rounsley S.D."/>
            <person name="Shea T.P."/>
            <person name="Benito M.-I."/>
            <person name="Town C.D."/>
            <person name="Fujii C.Y."/>
            <person name="Mason T.M."/>
            <person name="Bowman C.L."/>
            <person name="Barnstead M.E."/>
            <person name="Feldblyum T.V."/>
            <person name="Buell C.R."/>
            <person name="Ketchum K.A."/>
            <person name="Lee J.J."/>
            <person name="Ronning C.M."/>
            <person name="Koo H.L."/>
            <person name="Moffat K.S."/>
            <person name="Cronin L.A."/>
            <person name="Shen M."/>
            <person name="Pai G."/>
            <person name="Van Aken S."/>
            <person name="Umayam L."/>
            <person name="Tallon L.J."/>
            <person name="Gill J.E."/>
            <person name="Adams M.D."/>
            <person name="Carrera A.J."/>
            <person name="Creasy T.H."/>
            <person name="Goodman H.M."/>
            <person name="Somerville C.R."/>
            <person name="Copenhaver G.P."/>
            <person name="Preuss D."/>
            <person name="Nierman W.C."/>
            <person name="White O."/>
            <person name="Eisen J.A."/>
            <person name="Salzberg S.L."/>
            <person name="Fraser C.M."/>
            <person name="Venter J.C."/>
        </authorList>
    </citation>
    <scope>NUCLEOTIDE SEQUENCE [LARGE SCALE GENOMIC DNA]</scope>
    <source>
        <strain>cv. Columbia</strain>
    </source>
</reference>
<reference key="2">
    <citation type="journal article" date="2017" name="Plant J.">
        <title>Araport11: a complete reannotation of the Arabidopsis thaliana reference genome.</title>
        <authorList>
            <person name="Cheng C.Y."/>
            <person name="Krishnakumar V."/>
            <person name="Chan A.P."/>
            <person name="Thibaud-Nissen F."/>
            <person name="Schobel S."/>
            <person name="Town C.D."/>
        </authorList>
    </citation>
    <scope>GENOME REANNOTATION</scope>
    <source>
        <strain>cv. Columbia</strain>
    </source>
</reference>
<reference key="3">
    <citation type="journal article" date="2003" name="Science">
        <title>Empirical analysis of transcriptional activity in the Arabidopsis genome.</title>
        <authorList>
            <person name="Yamada K."/>
            <person name="Lim J."/>
            <person name="Dale J.M."/>
            <person name="Chen H."/>
            <person name="Shinn P."/>
            <person name="Palm C.J."/>
            <person name="Southwick A.M."/>
            <person name="Wu H.C."/>
            <person name="Kim C.J."/>
            <person name="Nguyen M."/>
            <person name="Pham P.K."/>
            <person name="Cheuk R.F."/>
            <person name="Karlin-Newmann G."/>
            <person name="Liu S.X."/>
            <person name="Lam B."/>
            <person name="Sakano H."/>
            <person name="Wu T."/>
            <person name="Yu G."/>
            <person name="Miranda M."/>
            <person name="Quach H.L."/>
            <person name="Tripp M."/>
            <person name="Chang C.H."/>
            <person name="Lee J.M."/>
            <person name="Toriumi M.J."/>
            <person name="Chan M.M."/>
            <person name="Tang C.C."/>
            <person name="Onodera C.S."/>
            <person name="Deng J.M."/>
            <person name="Akiyama K."/>
            <person name="Ansari Y."/>
            <person name="Arakawa T."/>
            <person name="Banh J."/>
            <person name="Banno F."/>
            <person name="Bowser L."/>
            <person name="Brooks S.Y."/>
            <person name="Carninci P."/>
            <person name="Chao Q."/>
            <person name="Choy N."/>
            <person name="Enju A."/>
            <person name="Goldsmith A.D."/>
            <person name="Gurjal M."/>
            <person name="Hansen N.F."/>
            <person name="Hayashizaki Y."/>
            <person name="Johnson-Hopson C."/>
            <person name="Hsuan V.W."/>
            <person name="Iida K."/>
            <person name="Karnes M."/>
            <person name="Khan S."/>
            <person name="Koesema E."/>
            <person name="Ishida J."/>
            <person name="Jiang P.X."/>
            <person name="Jones T."/>
            <person name="Kawai J."/>
            <person name="Kamiya A."/>
            <person name="Meyers C."/>
            <person name="Nakajima M."/>
            <person name="Narusaka M."/>
            <person name="Seki M."/>
            <person name="Sakurai T."/>
            <person name="Satou M."/>
            <person name="Tamse R."/>
            <person name="Vaysberg M."/>
            <person name="Wallender E.K."/>
            <person name="Wong C."/>
            <person name="Yamamura Y."/>
            <person name="Yuan S."/>
            <person name="Shinozaki K."/>
            <person name="Davis R.W."/>
            <person name="Theologis A."/>
            <person name="Ecker J.R."/>
        </authorList>
    </citation>
    <scope>NUCLEOTIDE SEQUENCE [LARGE SCALE MRNA]</scope>
    <source>
        <strain>cv. Columbia</strain>
    </source>
</reference>
<reference key="4">
    <citation type="journal article" date="1999" name="Plant Mol. Biol.">
        <title>Characterization of the Arabidopsis lecRK-a genes: members of a superfamily encoding putative receptors with an extracellular domain homologous to legume lectins.</title>
        <authorList>
            <person name="Herve C."/>
            <person name="Serres J."/>
            <person name="Dabos P."/>
            <person name="Canut H."/>
            <person name="Barre A."/>
            <person name="Rouge P."/>
            <person name="Lescure B."/>
        </authorList>
    </citation>
    <scope>GENE FAMILY</scope>
</reference>
<reference key="5">
    <citation type="journal article" date="2002" name="Crit. Rev. Plant Sci.">
        <title>Lectin receptor kinases in plants.</title>
        <authorList>
            <person name="Barre A."/>
            <person name="Herve C."/>
            <person name="Lescure B."/>
            <person name="Rouge P."/>
        </authorList>
    </citation>
    <scope>GENE FAMILY</scope>
</reference>
<reference key="6">
    <citation type="journal article" date="2009" name="J. Exp. Bot.">
        <title>Arabidopsis L-type lectin receptor kinases: phylogeny, classification, and expression profiles.</title>
        <authorList>
            <person name="Bouwmeester K."/>
            <person name="Govers F."/>
        </authorList>
    </citation>
    <scope>GENE FAMILY</scope>
    <scope>NOMENCLATURE</scope>
</reference>
<reference key="7">
    <citation type="journal article" date="2014" name="Mol. Plant Microbe Interact.">
        <title>Phenotypic analyses of Arabidopsis T-DNA insertion lines and expression profiling reveal that multiple L-type lectin receptor kinases are involved in plant immunity.</title>
        <authorList>
            <person name="Wang Y."/>
            <person name="Bouwmeester K."/>
            <person name="Beseh P."/>
            <person name="Shan W."/>
            <person name="Govers F."/>
        </authorList>
    </citation>
    <scope>FUNCTION</scope>
    <scope>DISRUPTION PHENOTYPE</scope>
    <source>
        <strain>cv. Columbia</strain>
    </source>
</reference>